<keyword id="KW-1015">Disulfide bond</keyword>
<keyword id="KW-0574">Periplasm</keyword>
<keyword id="KW-0676">Redox-active center</keyword>
<keyword id="KW-1185">Reference proteome</keyword>
<keyword id="KW-0732">Signal</keyword>
<sequence>MQSTTFTRLLAAAALGATTLFAPATQAQGAQQYVNINPPMPSDTPGKIEVLEFFAYTCPHCAAIEPMVEDWAKTAPQDVVLKQVPIAFNAGMKPLQQLYYTLQALERPDLHPKVFTAIHTERKRLFDKKAMGEWAASQGVDRAKFDSVFDSFSVQTQVQHASQLAEAAHIDGTPAFAVGGRYMTSPVLAGNDYAGALKVVDQLIVQSRK</sequence>
<protein>
    <recommendedName>
        <fullName>Thiol:disulfide interchange protein DsbA</fullName>
    </recommendedName>
</protein>
<proteinExistence type="evidence at protein level"/>
<accession>Q7W0K2</accession>
<feature type="signal peptide" evidence="2">
    <location>
        <begin position="1"/>
        <end position="27"/>
    </location>
</feature>
<feature type="chain" id="PRO_0000245632" description="Thiol:disulfide interchange protein DsbA">
    <location>
        <begin position="28"/>
        <end position="209"/>
    </location>
</feature>
<feature type="disulfide bond" description="Redox-active" evidence="3">
    <location>
        <begin position="58"/>
        <end position="61"/>
    </location>
</feature>
<evidence type="ECO:0000250" key="1"/>
<evidence type="ECO:0000255" key="2"/>
<evidence type="ECO:0000255" key="3">
    <source>
        <dbReference type="PROSITE-ProRule" id="PRU00691"/>
    </source>
</evidence>
<evidence type="ECO:0000269" key="4">
    <source>
    </source>
</evidence>
<evidence type="ECO:0000305" key="5"/>
<comment type="function">
    <text evidence="1 4">Involved in disulfide-bond formation. Acts by transferring its disulfide bond to other proteins (By similarity). Required for periplasmic assembly of the pertussis toxin (PTX).</text>
</comment>
<comment type="subcellular location">
    <subcellularLocation>
        <location evidence="1">Periplasm</location>
    </subcellularLocation>
</comment>
<comment type="similarity">
    <text evidence="5">Belongs to the thioredoxin family. DsbA subfamily.</text>
</comment>
<name>DSBA_BORPE</name>
<dbReference type="EMBL" id="BX640411">
    <property type="protein sequence ID" value="CAE40493.1"/>
    <property type="molecule type" value="Genomic_DNA"/>
</dbReference>
<dbReference type="RefSeq" id="NP_879015.1">
    <property type="nucleotide sequence ID" value="NC_002929.2"/>
</dbReference>
<dbReference type="RefSeq" id="WP_010929628.1">
    <property type="nucleotide sequence ID" value="NZ_CP039022.1"/>
</dbReference>
<dbReference type="SMR" id="Q7W0K2"/>
<dbReference type="STRING" id="257313.BP0113"/>
<dbReference type="PaxDb" id="257313-BP0113"/>
<dbReference type="KEGG" id="bpe:BP0113"/>
<dbReference type="PATRIC" id="fig|257313.5.peg.115"/>
<dbReference type="eggNOG" id="COG1651">
    <property type="taxonomic scope" value="Bacteria"/>
</dbReference>
<dbReference type="HOGENOM" id="CLU_088255_1_0_4"/>
<dbReference type="Proteomes" id="UP000002676">
    <property type="component" value="Chromosome"/>
</dbReference>
<dbReference type="GO" id="GO:0042597">
    <property type="term" value="C:periplasmic space"/>
    <property type="evidence" value="ECO:0007669"/>
    <property type="project" value="UniProtKB-SubCell"/>
</dbReference>
<dbReference type="GO" id="GO:0015036">
    <property type="term" value="F:disulfide oxidoreductase activity"/>
    <property type="evidence" value="ECO:0007669"/>
    <property type="project" value="UniProtKB-ARBA"/>
</dbReference>
<dbReference type="CDD" id="cd03019">
    <property type="entry name" value="DsbA_DsbA"/>
    <property type="match status" value="1"/>
</dbReference>
<dbReference type="Gene3D" id="3.40.30.10">
    <property type="entry name" value="Glutaredoxin"/>
    <property type="match status" value="1"/>
</dbReference>
<dbReference type="InterPro" id="IPR001853">
    <property type="entry name" value="DSBA-like_thioredoxin_dom"/>
</dbReference>
<dbReference type="InterPro" id="IPR023205">
    <property type="entry name" value="DsbA/DsbL"/>
</dbReference>
<dbReference type="InterPro" id="IPR050824">
    <property type="entry name" value="Thiol_disulfide_DsbA"/>
</dbReference>
<dbReference type="InterPro" id="IPR036249">
    <property type="entry name" value="Thioredoxin-like_sf"/>
</dbReference>
<dbReference type="InterPro" id="IPR017937">
    <property type="entry name" value="Thioredoxin_CS"/>
</dbReference>
<dbReference type="InterPro" id="IPR013766">
    <property type="entry name" value="Thioredoxin_domain"/>
</dbReference>
<dbReference type="PANTHER" id="PTHR35891">
    <property type="entry name" value="THIOL:DISULFIDE INTERCHANGE PROTEIN DSBA"/>
    <property type="match status" value="1"/>
</dbReference>
<dbReference type="PANTHER" id="PTHR35891:SF3">
    <property type="entry name" value="THIOL:DISULFIDE INTERCHANGE PROTEIN DSBL"/>
    <property type="match status" value="1"/>
</dbReference>
<dbReference type="Pfam" id="PF01323">
    <property type="entry name" value="DSBA"/>
    <property type="match status" value="1"/>
</dbReference>
<dbReference type="Pfam" id="PF00085">
    <property type="entry name" value="Thioredoxin"/>
    <property type="match status" value="1"/>
</dbReference>
<dbReference type="PIRSF" id="PIRSF001488">
    <property type="entry name" value="Tdi_protein"/>
    <property type="match status" value="1"/>
</dbReference>
<dbReference type="SUPFAM" id="SSF52833">
    <property type="entry name" value="Thioredoxin-like"/>
    <property type="match status" value="1"/>
</dbReference>
<dbReference type="PROSITE" id="PS00194">
    <property type="entry name" value="THIOREDOXIN_1"/>
    <property type="match status" value="1"/>
</dbReference>
<dbReference type="PROSITE" id="PS51352">
    <property type="entry name" value="THIOREDOXIN_2"/>
    <property type="match status" value="1"/>
</dbReference>
<organism>
    <name type="scientific">Bordetella pertussis (strain Tohama I / ATCC BAA-589 / NCTC 13251)</name>
    <dbReference type="NCBI Taxonomy" id="257313"/>
    <lineage>
        <taxon>Bacteria</taxon>
        <taxon>Pseudomonadati</taxon>
        <taxon>Pseudomonadota</taxon>
        <taxon>Betaproteobacteria</taxon>
        <taxon>Burkholderiales</taxon>
        <taxon>Alcaligenaceae</taxon>
        <taxon>Bordetella</taxon>
    </lineage>
</organism>
<reference key="1">
    <citation type="journal article" date="2003" name="Nat. Genet.">
        <title>Comparative analysis of the genome sequences of Bordetella pertussis, Bordetella parapertussis and Bordetella bronchiseptica.</title>
        <authorList>
            <person name="Parkhill J."/>
            <person name="Sebaihia M."/>
            <person name="Preston A."/>
            <person name="Murphy L.D."/>
            <person name="Thomson N.R."/>
            <person name="Harris D.E."/>
            <person name="Holden M.T.G."/>
            <person name="Churcher C.M."/>
            <person name="Bentley S.D."/>
            <person name="Mungall K.L."/>
            <person name="Cerdeno-Tarraga A.-M."/>
            <person name="Temple L."/>
            <person name="James K.D."/>
            <person name="Harris B."/>
            <person name="Quail M.A."/>
            <person name="Achtman M."/>
            <person name="Atkin R."/>
            <person name="Baker S."/>
            <person name="Basham D."/>
            <person name="Bason N."/>
            <person name="Cherevach I."/>
            <person name="Chillingworth T."/>
            <person name="Collins M."/>
            <person name="Cronin A."/>
            <person name="Davis P."/>
            <person name="Doggett J."/>
            <person name="Feltwell T."/>
            <person name="Goble A."/>
            <person name="Hamlin N."/>
            <person name="Hauser H."/>
            <person name="Holroyd S."/>
            <person name="Jagels K."/>
            <person name="Leather S."/>
            <person name="Moule S."/>
            <person name="Norberczak H."/>
            <person name="O'Neil S."/>
            <person name="Ormond D."/>
            <person name="Price C."/>
            <person name="Rabbinowitsch E."/>
            <person name="Rutter S."/>
            <person name="Sanders M."/>
            <person name="Saunders D."/>
            <person name="Seeger K."/>
            <person name="Sharp S."/>
            <person name="Simmonds M."/>
            <person name="Skelton J."/>
            <person name="Squares R."/>
            <person name="Squares S."/>
            <person name="Stevens K."/>
            <person name="Unwin L."/>
            <person name="Whitehead S."/>
            <person name="Barrell B.G."/>
            <person name="Maskell D.J."/>
        </authorList>
    </citation>
    <scope>NUCLEOTIDE SEQUENCE [LARGE SCALE GENOMIC DNA]</scope>
    <source>
        <strain>Tohama I / ATCC BAA-589 / NCTC 13251</strain>
    </source>
</reference>
<reference key="2">
    <citation type="journal article" date="2002" name="Infect. Immun.">
        <title>DsbA and DsbC are required for secretion of pertussis toxin by Bordetella pertussis.</title>
        <authorList>
            <person name="Stenson T.H."/>
            <person name="Weiss A.A."/>
        </authorList>
    </citation>
    <scope>FUNCTION IN PERTUSSIS TOXIN SECRETION</scope>
    <source>
        <strain>Tohama I / BP338</strain>
    </source>
</reference>
<gene>
    <name type="primary">dsbA</name>
    <name type="ordered locus">BP0113</name>
</gene>